<organism>
    <name type="scientific">Staphylococcus aureus (strain JH9)</name>
    <dbReference type="NCBI Taxonomy" id="359786"/>
    <lineage>
        <taxon>Bacteria</taxon>
        <taxon>Bacillati</taxon>
        <taxon>Bacillota</taxon>
        <taxon>Bacilli</taxon>
        <taxon>Bacillales</taxon>
        <taxon>Staphylococcaceae</taxon>
        <taxon>Staphylococcus</taxon>
    </lineage>
</organism>
<protein>
    <recommendedName>
        <fullName evidence="1">Putative septation protein SpoVG</fullName>
    </recommendedName>
</protein>
<feature type="chain" id="PRO_1000083849" description="Putative septation protein SpoVG">
    <location>
        <begin position="1"/>
        <end position="100"/>
    </location>
</feature>
<evidence type="ECO:0000255" key="1">
    <source>
        <dbReference type="HAMAP-Rule" id="MF_00819"/>
    </source>
</evidence>
<comment type="function">
    <text evidence="1">Could be involved in septation.</text>
</comment>
<comment type="similarity">
    <text evidence="1">Belongs to the SpoVG family.</text>
</comment>
<name>SP5G_STAA9</name>
<gene>
    <name evidence="1" type="primary">spoVG</name>
    <name type="ordered locus">SaurJH9_0519</name>
</gene>
<proteinExistence type="inferred from homology"/>
<sequence>MKVTDVRLRKIQTDGRMKALVSITLDEAFVIHDLRVIEGNSGLFVAMPSKRTPDGEFRDIAHPINSDMRQEIQDAVMKVYDETDEVVPDKNATSEDSEEA</sequence>
<dbReference type="EMBL" id="CP000703">
    <property type="protein sequence ID" value="ABQ48323.1"/>
    <property type="molecule type" value="Genomic_DNA"/>
</dbReference>
<dbReference type="RefSeq" id="WP_000868999.1">
    <property type="nucleotide sequence ID" value="NC_009487.1"/>
</dbReference>
<dbReference type="SMR" id="A5IQ50"/>
<dbReference type="KEGG" id="saj:SaurJH9_0519"/>
<dbReference type="HOGENOM" id="CLU_103669_2_1_9"/>
<dbReference type="GO" id="GO:0000917">
    <property type="term" value="P:division septum assembly"/>
    <property type="evidence" value="ECO:0007669"/>
    <property type="project" value="UniProtKB-KW"/>
</dbReference>
<dbReference type="GO" id="GO:0030435">
    <property type="term" value="P:sporulation resulting in formation of a cellular spore"/>
    <property type="evidence" value="ECO:0007669"/>
    <property type="project" value="InterPro"/>
</dbReference>
<dbReference type="Gene3D" id="3.30.1120.40">
    <property type="entry name" value="Stage V sporulation protein G"/>
    <property type="match status" value="1"/>
</dbReference>
<dbReference type="HAMAP" id="MF_00819">
    <property type="entry name" value="SpoVG"/>
    <property type="match status" value="1"/>
</dbReference>
<dbReference type="InterPro" id="IPR007170">
    <property type="entry name" value="SpoVG"/>
</dbReference>
<dbReference type="InterPro" id="IPR036751">
    <property type="entry name" value="SpoVG_sf"/>
</dbReference>
<dbReference type="NCBIfam" id="NF009749">
    <property type="entry name" value="PRK13259.1"/>
    <property type="match status" value="1"/>
</dbReference>
<dbReference type="PANTHER" id="PTHR38429">
    <property type="entry name" value="SEPTATION PROTEIN SPOVG-RELATED"/>
    <property type="match status" value="1"/>
</dbReference>
<dbReference type="PANTHER" id="PTHR38429:SF1">
    <property type="entry name" value="SEPTATION PROTEIN SPOVG-RELATED"/>
    <property type="match status" value="1"/>
</dbReference>
<dbReference type="Pfam" id="PF04026">
    <property type="entry name" value="SpoVG"/>
    <property type="match status" value="1"/>
</dbReference>
<dbReference type="SUPFAM" id="SSF160537">
    <property type="entry name" value="SpoVG-like"/>
    <property type="match status" value="1"/>
</dbReference>
<reference key="1">
    <citation type="submission" date="2007-05" db="EMBL/GenBank/DDBJ databases">
        <title>Complete sequence of chromosome of Staphylococcus aureus subsp. aureus JH9.</title>
        <authorList>
            <consortium name="US DOE Joint Genome Institute"/>
            <person name="Copeland A."/>
            <person name="Lucas S."/>
            <person name="Lapidus A."/>
            <person name="Barry K."/>
            <person name="Detter J.C."/>
            <person name="Glavina del Rio T."/>
            <person name="Hammon N."/>
            <person name="Israni S."/>
            <person name="Pitluck S."/>
            <person name="Chain P."/>
            <person name="Malfatti S."/>
            <person name="Shin M."/>
            <person name="Vergez L."/>
            <person name="Schmutz J."/>
            <person name="Larimer F."/>
            <person name="Land M."/>
            <person name="Hauser L."/>
            <person name="Kyrpides N."/>
            <person name="Kim E."/>
            <person name="Tomasz A."/>
            <person name="Richardson P."/>
        </authorList>
    </citation>
    <scope>NUCLEOTIDE SEQUENCE [LARGE SCALE GENOMIC DNA]</scope>
    <source>
        <strain>JH9</strain>
    </source>
</reference>
<keyword id="KW-0131">Cell cycle</keyword>
<keyword id="KW-0132">Cell division</keyword>
<keyword id="KW-0717">Septation</keyword>
<accession>A5IQ50</accession>